<gene>
    <name type="primary">EAT1</name>
    <name type="ORF">BON22_2185</name>
    <name type="ORF">CYFA0S_05e01970g</name>
</gene>
<feature type="chain" id="PRO_0000446173" description="Ethanol acetyltransferase 1">
    <location>
        <begin position="1"/>
        <end position="335"/>
    </location>
</feature>
<feature type="domain" description="AB hydrolase-1" evidence="2">
    <location>
        <begin position="48"/>
        <end position="300"/>
    </location>
</feature>
<feature type="active site" description="Charge relay system" evidence="1">
    <location>
        <position position="121"/>
    </location>
</feature>
<feature type="active site" description="Charge relay system" evidence="1">
    <location>
        <position position="145"/>
    </location>
</feature>
<feature type="active site" description="Charge relay system" evidence="1">
    <location>
        <position position="294"/>
    </location>
</feature>
<comment type="function">
    <text evidence="1 3">Alcohol acetyltransferase that catalyzes the synthesis of ethyl acetate from ethanol and acetyl-CoA (PubMed:28356220). Can also function as a thioesterase by hydrolyzing acetyl-CoA in the absence of ethanol, as well as esterase hydrolyzing ethyl acetate (By similarity).</text>
</comment>
<comment type="catalytic activity">
    <reaction evidence="3">
        <text>ethanol + acetyl-CoA = ethyl acetate + CoA</text>
        <dbReference type="Rhea" id="RHEA:55972"/>
        <dbReference type="ChEBI" id="CHEBI:16236"/>
        <dbReference type="ChEBI" id="CHEBI:27750"/>
        <dbReference type="ChEBI" id="CHEBI:57287"/>
        <dbReference type="ChEBI" id="CHEBI:57288"/>
        <dbReference type="EC" id="2.3.1.268"/>
    </reaction>
</comment>
<comment type="catalytic activity">
    <reaction evidence="1">
        <text>acetyl-CoA + H2O = acetate + CoA + H(+)</text>
        <dbReference type="Rhea" id="RHEA:20289"/>
        <dbReference type="ChEBI" id="CHEBI:15377"/>
        <dbReference type="ChEBI" id="CHEBI:15378"/>
        <dbReference type="ChEBI" id="CHEBI:30089"/>
        <dbReference type="ChEBI" id="CHEBI:57287"/>
        <dbReference type="ChEBI" id="CHEBI:57288"/>
        <dbReference type="EC" id="3.1.2.1"/>
    </reaction>
</comment>
<comment type="catalytic activity">
    <reaction evidence="1">
        <text>ethyl acetate + H2O = ethanol + acetate + H(+)</text>
        <dbReference type="Rhea" id="RHEA:58148"/>
        <dbReference type="ChEBI" id="CHEBI:15377"/>
        <dbReference type="ChEBI" id="CHEBI:15378"/>
        <dbReference type="ChEBI" id="CHEBI:16236"/>
        <dbReference type="ChEBI" id="CHEBI:27750"/>
        <dbReference type="ChEBI" id="CHEBI:30089"/>
    </reaction>
</comment>
<comment type="subcellular location">
    <subcellularLocation>
        <location evidence="1">Mitochondrion</location>
    </subcellularLocation>
</comment>
<comment type="similarity">
    <text evidence="4">Belongs to the AB hydrolase superfamily.</text>
</comment>
<keyword id="KW-0378">Hydrolase</keyword>
<keyword id="KW-0496">Mitochondrion</keyword>
<keyword id="KW-1185">Reference proteome</keyword>
<keyword id="KW-0808">Transferase</keyword>
<evidence type="ECO:0000250" key="1">
    <source>
        <dbReference type="UniProtKB" id="A0A1E3P8S6"/>
    </source>
</evidence>
<evidence type="ECO:0000255" key="2"/>
<evidence type="ECO:0000269" key="3">
    <source>
    </source>
</evidence>
<evidence type="ECO:0000305" key="4"/>
<organism>
    <name type="scientific">Cyberlindnera fabianii</name>
    <name type="common">Yeast</name>
    <name type="synonym">Hansenula fabianii</name>
    <dbReference type="NCBI Taxonomy" id="36022"/>
    <lineage>
        <taxon>Eukaryota</taxon>
        <taxon>Fungi</taxon>
        <taxon>Dikarya</taxon>
        <taxon>Ascomycota</taxon>
        <taxon>Saccharomycotina</taxon>
        <taxon>Saccharomycetes</taxon>
        <taxon>Phaffomycetales</taxon>
        <taxon>Phaffomycetaceae</taxon>
        <taxon>Cyberlindnera</taxon>
    </lineage>
</organism>
<protein>
    <recommendedName>
        <fullName>Ethanol acetyltransferase 1</fullName>
        <ecNumber>2.3.1.268</ecNumber>
    </recommendedName>
    <alternativeName>
        <fullName>Acetyl-CoA hydrolase</fullName>
        <ecNumber>3.1.2.1</ecNumber>
    </alternativeName>
    <alternativeName>
        <fullName>Acetyl-CoA thioesterase</fullName>
    </alternativeName>
    <alternativeName>
        <fullName>Alcohol acetyltransferase</fullName>
        <shortName>AAT</shortName>
    </alternativeName>
    <alternativeName>
        <fullName>Ethyl acetate esterase</fullName>
        <ecNumber>3.1.1.-</ecNumber>
    </alternativeName>
</protein>
<proteinExistence type="evidence at protein level"/>
<dbReference type="EC" id="2.3.1.268"/>
<dbReference type="EC" id="3.1.2.1"/>
<dbReference type="EC" id="3.1.1.-"/>
<dbReference type="EMBL" id="LK052890">
    <property type="protein sequence ID" value="CDR40570.1"/>
    <property type="molecule type" value="Genomic_DNA"/>
</dbReference>
<dbReference type="EMBL" id="MPUK01000003">
    <property type="protein sequence ID" value="ONH67980.1"/>
    <property type="molecule type" value="Genomic_DNA"/>
</dbReference>
<dbReference type="SMR" id="A0A061B0Q2"/>
<dbReference type="STRING" id="36022.A0A061B0Q2"/>
<dbReference type="ESTHER" id="cybfa-a0a061b0q2">
    <property type="family name" value="ABHD11-Acetyl_transferase"/>
</dbReference>
<dbReference type="VEuPathDB" id="FungiDB:BON22_2185"/>
<dbReference type="OMA" id="FFVDSIC"/>
<dbReference type="OrthoDB" id="8119704at2759"/>
<dbReference type="PhylomeDB" id="A0A061B0Q2"/>
<dbReference type="Proteomes" id="UP000189513">
    <property type="component" value="Unassembled WGS sequence"/>
</dbReference>
<dbReference type="GO" id="GO:0005739">
    <property type="term" value="C:mitochondrion"/>
    <property type="evidence" value="ECO:0007669"/>
    <property type="project" value="UniProtKB-SubCell"/>
</dbReference>
<dbReference type="GO" id="GO:0003986">
    <property type="term" value="F:acetyl-CoA hydrolase activity"/>
    <property type="evidence" value="ECO:0007669"/>
    <property type="project" value="UniProtKB-EC"/>
</dbReference>
<dbReference type="GO" id="GO:0052689">
    <property type="term" value="F:carboxylic ester hydrolase activity"/>
    <property type="evidence" value="ECO:0007669"/>
    <property type="project" value="TreeGrafter"/>
</dbReference>
<dbReference type="GO" id="GO:0016740">
    <property type="term" value="F:transferase activity"/>
    <property type="evidence" value="ECO:0007669"/>
    <property type="project" value="UniProtKB-KW"/>
</dbReference>
<dbReference type="Gene3D" id="3.40.50.1820">
    <property type="entry name" value="alpha/beta hydrolase"/>
    <property type="match status" value="1"/>
</dbReference>
<dbReference type="InterPro" id="IPR000073">
    <property type="entry name" value="AB_hydrolase_1"/>
</dbReference>
<dbReference type="InterPro" id="IPR029058">
    <property type="entry name" value="AB_hydrolase_fold"/>
</dbReference>
<dbReference type="PANTHER" id="PTHR46118">
    <property type="entry name" value="PROTEIN ABHD11"/>
    <property type="match status" value="1"/>
</dbReference>
<dbReference type="PANTHER" id="PTHR46118:SF4">
    <property type="entry name" value="PROTEIN ABHD11"/>
    <property type="match status" value="1"/>
</dbReference>
<dbReference type="Pfam" id="PF00561">
    <property type="entry name" value="Abhydrolase_1"/>
    <property type="match status" value="1"/>
</dbReference>
<dbReference type="SUPFAM" id="SSF53474">
    <property type="entry name" value="alpha/beta-Hydrolases"/>
    <property type="match status" value="1"/>
</dbReference>
<reference key="1">
    <citation type="journal article" date="2014" name="Genome Announc.">
        <title>Genome sequence of the yeast Cyberlindnera fabianii (Hansenula fabianii).</title>
        <authorList>
            <person name="Freel K.C."/>
            <person name="Sarilar V."/>
            <person name="Neuveglise C."/>
            <person name="Devillers H."/>
            <person name="Friedrich A."/>
            <person name="Schacherer J."/>
        </authorList>
    </citation>
    <scope>NUCLEOTIDE SEQUENCE [LARGE SCALE GENOMIC DNA]</scope>
    <source>
        <strain>YJS4271</strain>
    </source>
</reference>
<reference key="2">
    <citation type="journal article" date="2017" name="Genome Announc.">
        <title>Genome sequences of Cyberlindnera fabianii 65, Pichia kudriavzevii 129, and Saccharomyces cerevisiae 131 isolated from fermented masau fruits in Zimbabwe.</title>
        <authorList>
            <person name="van Rijswijck I.M.H."/>
            <person name="Derks M.F.L."/>
            <person name="Abee T."/>
            <person name="de Ridder D."/>
            <person name="Smid E.J."/>
        </authorList>
    </citation>
    <scope>NUCLEOTIDE SEQUENCE [LARGE SCALE GENOMIC DNA]</scope>
    <source>
        <strain>65</strain>
    </source>
</reference>
<reference key="3">
    <citation type="journal article" date="2017" name="Metab. Eng.">
        <title>Ethyl acetate production by the elusive alcohol acetyltransferase from yeast.</title>
        <authorList>
            <person name="Kruis A.J."/>
            <person name="Levisson M."/>
            <person name="Mars A.E."/>
            <person name="van der Ploeg M."/>
            <person name="Garces Daza F."/>
            <person name="Ellena V."/>
            <person name="Kengen S.W.M."/>
            <person name="van der Oost J."/>
            <person name="Weusthuis R.A."/>
        </authorList>
    </citation>
    <scope>FUNCTION</scope>
    <scope>CATALYTIC ACTIVITY</scope>
    <source>
        <strain>CBS 5640</strain>
    </source>
</reference>
<accession>A0A061B0Q2</accession>
<name>EAT1_CYBFA</name>
<sequence length="335" mass="38016">MFKPTRVLKSSQPILNSLPHAETVKMAYDLHLPKKTLHQNMNITSDEPIVFVHGIFGSKKSYATDSKLIANGTHSPVYTIDLRNHGETGHAQPFNYDTLVQDIKEFCSTHNLSNIKLVGYSLGAKVSMLAALRLPELVKSAVIIDNAPIKQPYIESYMKQYIKSMLHVDDAKISTTDKDWKRKASEAMKRYMPNATVRKNLLVNLVNKKPEGFESPAIDFENGNIQFLNPIKHMEEMAVKDVSDWPVESTEGLKFDGPVKFIRGLKSPFISPEGFKKINEHFPKNEFYDVNSAHDILDQRPSEYVKVICDFFNLQRYNSAPAHTVLGHKAPEMRV</sequence>